<sequence length="359" mass="40557">MAFNGTVPSFCMDFTVYKVTISVILIILILVTVAGNVVVCLAVGLNRRLRSLTNCFIVSLAVTDLLLGLLVLPFSAIYQLSCKWSFSKVFCNIYTSLDVMLCTASILNLFMISLDRYCAVTDPLRYPVLITPARVAISLVFIWVISITLSFLSIHLGWNSRNETSKDNDTIVKCKVQVNEVYGLVDGLVTFYLPLLIMCITYFRIFKIAREQARRINHIGSWKAATIREHKATVTLAAVMGAFIICWFPYFTVFVYRGLKGDDAVNEVFEDVVLWLGYANSALNPILYAALNRDFRTAYHQLFCCRLASHNSHETSLRLNNSQLNRSQCQEPRWQEDKPLNLQVWSGTEVTAPQGATNR</sequence>
<dbReference type="EMBL" id="U25440">
    <property type="protein sequence ID" value="AAA65713.1"/>
    <property type="molecule type" value="Genomic_DNA"/>
</dbReference>
<dbReference type="PIR" id="JC4120">
    <property type="entry name" value="JC4120"/>
</dbReference>
<dbReference type="SMR" id="P47747"/>
<dbReference type="FunCoup" id="P47747">
    <property type="interactions" value="639"/>
</dbReference>
<dbReference type="STRING" id="10141.ENSCPOP00000032709"/>
<dbReference type="BindingDB" id="P47747"/>
<dbReference type="ChEMBL" id="CHEMBL2882"/>
<dbReference type="DrugCentral" id="P47747"/>
<dbReference type="GlyCosmos" id="P47747">
    <property type="glycosylation" value="1 site, No reported glycans"/>
</dbReference>
<dbReference type="eggNOG" id="KOG3656">
    <property type="taxonomic scope" value="Eukaryota"/>
</dbReference>
<dbReference type="InParanoid" id="P47747"/>
<dbReference type="Proteomes" id="UP000005447">
    <property type="component" value="Unassembled WGS sequence"/>
</dbReference>
<dbReference type="GO" id="GO:0030425">
    <property type="term" value="C:dendrite"/>
    <property type="evidence" value="ECO:0007669"/>
    <property type="project" value="TreeGrafter"/>
</dbReference>
<dbReference type="GO" id="GO:0005886">
    <property type="term" value="C:plasma membrane"/>
    <property type="evidence" value="ECO:0007669"/>
    <property type="project" value="UniProtKB-SubCell"/>
</dbReference>
<dbReference type="GO" id="GO:0045202">
    <property type="term" value="C:synapse"/>
    <property type="evidence" value="ECO:0007669"/>
    <property type="project" value="GOC"/>
</dbReference>
<dbReference type="GO" id="GO:0004993">
    <property type="term" value="F:G protein-coupled serotonin receptor activity"/>
    <property type="evidence" value="ECO:0007669"/>
    <property type="project" value="TreeGrafter"/>
</dbReference>
<dbReference type="GO" id="GO:0004969">
    <property type="term" value="F:histamine receptor activity"/>
    <property type="evidence" value="ECO:0007669"/>
    <property type="project" value="InterPro"/>
</dbReference>
<dbReference type="GO" id="GO:0030594">
    <property type="term" value="F:neurotransmitter receptor activity"/>
    <property type="evidence" value="ECO:0007669"/>
    <property type="project" value="TreeGrafter"/>
</dbReference>
<dbReference type="GO" id="GO:0007268">
    <property type="term" value="P:chemical synaptic transmission"/>
    <property type="evidence" value="ECO:0007669"/>
    <property type="project" value="TreeGrafter"/>
</dbReference>
<dbReference type="GO" id="GO:0007187">
    <property type="term" value="P:G protein-coupled receptor signaling pathway, coupled to cyclic nucleotide second messenger"/>
    <property type="evidence" value="ECO:0007669"/>
    <property type="project" value="TreeGrafter"/>
</dbReference>
<dbReference type="GO" id="GO:0001696">
    <property type="term" value="P:gastric acid secretion"/>
    <property type="evidence" value="ECO:0007669"/>
    <property type="project" value="InterPro"/>
</dbReference>
<dbReference type="GO" id="GO:0045907">
    <property type="term" value="P:positive regulation of vasoconstriction"/>
    <property type="evidence" value="ECO:0007669"/>
    <property type="project" value="InterPro"/>
</dbReference>
<dbReference type="FunFam" id="1.20.1070.10:FF:000121">
    <property type="entry name" value="Histamine H2 receptor"/>
    <property type="match status" value="1"/>
</dbReference>
<dbReference type="Gene3D" id="1.20.1070.10">
    <property type="entry name" value="Rhodopsin 7-helix transmembrane proteins"/>
    <property type="match status" value="1"/>
</dbReference>
<dbReference type="InterPro" id="IPR000276">
    <property type="entry name" value="GPCR_Rhodpsn"/>
</dbReference>
<dbReference type="InterPro" id="IPR017452">
    <property type="entry name" value="GPCR_Rhodpsn_7TM"/>
</dbReference>
<dbReference type="InterPro" id="IPR000503">
    <property type="entry name" value="Histamine_H2_rcpt"/>
</dbReference>
<dbReference type="PANTHER" id="PTHR24247">
    <property type="entry name" value="5-HYDROXYTRYPTAMINE RECEPTOR"/>
    <property type="match status" value="1"/>
</dbReference>
<dbReference type="PANTHER" id="PTHR24247:SF278">
    <property type="entry name" value="HISTAMINE H2 RECEPTOR"/>
    <property type="match status" value="1"/>
</dbReference>
<dbReference type="Pfam" id="PF00001">
    <property type="entry name" value="7tm_1"/>
    <property type="match status" value="1"/>
</dbReference>
<dbReference type="PRINTS" id="PR00237">
    <property type="entry name" value="GPCRRHODOPSN"/>
</dbReference>
<dbReference type="PRINTS" id="PR00531">
    <property type="entry name" value="HISTAMINEH2R"/>
</dbReference>
<dbReference type="SMART" id="SM01381">
    <property type="entry name" value="7TM_GPCR_Srsx"/>
    <property type="match status" value="1"/>
</dbReference>
<dbReference type="SUPFAM" id="SSF81321">
    <property type="entry name" value="Family A G protein-coupled receptor-like"/>
    <property type="match status" value="1"/>
</dbReference>
<dbReference type="PROSITE" id="PS00237">
    <property type="entry name" value="G_PROTEIN_RECEP_F1_1"/>
    <property type="match status" value="1"/>
</dbReference>
<dbReference type="PROSITE" id="PS50262">
    <property type="entry name" value="G_PROTEIN_RECEP_F1_2"/>
    <property type="match status" value="1"/>
</dbReference>
<reference key="1">
    <citation type="journal article" date="1995" name="Biochem. Biophys. Res. Commun.">
        <title>The guinea pig histamine H2 receptor: gene cloning, tissue expression and chromosomal localization of its human counterpart.</title>
        <authorList>
            <person name="Traiffort E."/>
            <person name="Vizuete M.L."/>
            <person name="Tardivel-Lacombe J."/>
            <person name="Souil E."/>
            <person name="Schwartz J.-C."/>
            <person name="Ruat M."/>
        </authorList>
    </citation>
    <scope>NUCLEOTIDE SEQUENCE [GENOMIC DNA]</scope>
    <source>
        <strain>Hartley</strain>
        <tissue>Liver</tissue>
    </source>
</reference>
<comment type="function">
    <text>The H2 subclass of histamine receptors mediates gastric acid secretion. The activity of this receptor is mediated by G proteins which activate adenylyl cyclase.</text>
</comment>
<comment type="subcellular location">
    <subcellularLocation>
        <location>Cell membrane</location>
        <topology>Multi-pass membrane protein</topology>
    </subcellularLocation>
</comment>
<comment type="similarity">
    <text evidence="3">Belongs to the G-protein coupled receptor 1 family.</text>
</comment>
<protein>
    <recommendedName>
        <fullName>Histamine H2 receptor</fullName>
        <shortName>H2R</shortName>
        <shortName>HH2R</shortName>
    </recommendedName>
    <alternativeName>
        <fullName>Gastric receptor I</fullName>
    </alternativeName>
</protein>
<name>HRH2_CAVPO</name>
<proteinExistence type="inferred from homology"/>
<evidence type="ECO:0000250" key="1"/>
<evidence type="ECO:0000255" key="2"/>
<evidence type="ECO:0000255" key="3">
    <source>
        <dbReference type="PROSITE-ProRule" id="PRU00521"/>
    </source>
</evidence>
<accession>P47747</accession>
<keyword id="KW-1003">Cell membrane</keyword>
<keyword id="KW-1015">Disulfide bond</keyword>
<keyword id="KW-0297">G-protein coupled receptor</keyword>
<keyword id="KW-0325">Glycoprotein</keyword>
<keyword id="KW-0449">Lipoprotein</keyword>
<keyword id="KW-0472">Membrane</keyword>
<keyword id="KW-0564">Palmitate</keyword>
<keyword id="KW-0675">Receptor</keyword>
<keyword id="KW-1185">Reference proteome</keyword>
<keyword id="KW-0807">Transducer</keyword>
<keyword id="KW-0812">Transmembrane</keyword>
<keyword id="KW-1133">Transmembrane helix</keyword>
<feature type="chain" id="PRO_0000069682" description="Histamine H2 receptor">
    <location>
        <begin position="1"/>
        <end position="359"/>
    </location>
</feature>
<feature type="topological domain" description="Extracellular" evidence="2">
    <location>
        <begin position="1"/>
        <end position="22"/>
    </location>
</feature>
<feature type="transmembrane region" description="Helical; Name=1" evidence="2">
    <location>
        <begin position="23"/>
        <end position="44"/>
    </location>
</feature>
<feature type="topological domain" description="Cytoplasmic" evidence="2">
    <location>
        <begin position="45"/>
        <end position="57"/>
    </location>
</feature>
<feature type="transmembrane region" description="Helical; Name=2" evidence="2">
    <location>
        <begin position="58"/>
        <end position="81"/>
    </location>
</feature>
<feature type="topological domain" description="Extracellular" evidence="2">
    <location>
        <begin position="82"/>
        <end position="92"/>
    </location>
</feature>
<feature type="transmembrane region" description="Helical; Name=3" evidence="2">
    <location>
        <begin position="93"/>
        <end position="114"/>
    </location>
</feature>
<feature type="topological domain" description="Cytoplasmic" evidence="2">
    <location>
        <begin position="115"/>
        <end position="134"/>
    </location>
</feature>
<feature type="transmembrane region" description="Helical; Name=4" evidence="2">
    <location>
        <begin position="135"/>
        <end position="159"/>
    </location>
</feature>
<feature type="topological domain" description="Extracellular" evidence="2">
    <location>
        <begin position="160"/>
        <end position="180"/>
    </location>
</feature>
<feature type="transmembrane region" description="Helical; Name=5" evidence="2">
    <location>
        <begin position="181"/>
        <end position="204"/>
    </location>
</feature>
<feature type="topological domain" description="Cytoplasmic" evidence="2">
    <location>
        <begin position="205"/>
        <end position="234"/>
    </location>
</feature>
<feature type="transmembrane region" description="Helical; Name=6" evidence="2">
    <location>
        <begin position="235"/>
        <end position="258"/>
    </location>
</feature>
<feature type="topological domain" description="Extracellular" evidence="2">
    <location>
        <begin position="259"/>
        <end position="267"/>
    </location>
</feature>
<feature type="transmembrane region" description="Helical; Name=7" evidence="2">
    <location>
        <begin position="268"/>
        <end position="289"/>
    </location>
</feature>
<feature type="topological domain" description="Cytoplasmic" evidence="2">
    <location>
        <begin position="290"/>
        <end position="359"/>
    </location>
</feature>
<feature type="site" description="Essential for histamine binding" evidence="1">
    <location>
        <position position="98"/>
    </location>
</feature>
<feature type="site" description="Essential for tiotidine binding and implicated in histamine binding" evidence="1">
    <location>
        <position position="186"/>
    </location>
</feature>
<feature type="site" description="Implicated in histamine binding" evidence="1">
    <location>
        <position position="190"/>
    </location>
</feature>
<feature type="lipid moiety-binding region" description="S-palmitoyl cysteine" evidence="1">
    <location>
        <position position="305"/>
    </location>
</feature>
<feature type="glycosylation site" description="N-linked (GlcNAc...) asparagine" evidence="2">
    <location>
        <position position="4"/>
    </location>
</feature>
<feature type="disulfide bond" evidence="3">
    <location>
        <begin position="91"/>
        <end position="174"/>
    </location>
</feature>
<organism>
    <name type="scientific">Cavia porcellus</name>
    <name type="common">Guinea pig</name>
    <dbReference type="NCBI Taxonomy" id="10141"/>
    <lineage>
        <taxon>Eukaryota</taxon>
        <taxon>Metazoa</taxon>
        <taxon>Chordata</taxon>
        <taxon>Craniata</taxon>
        <taxon>Vertebrata</taxon>
        <taxon>Euteleostomi</taxon>
        <taxon>Mammalia</taxon>
        <taxon>Eutheria</taxon>
        <taxon>Euarchontoglires</taxon>
        <taxon>Glires</taxon>
        <taxon>Rodentia</taxon>
        <taxon>Hystricomorpha</taxon>
        <taxon>Caviidae</taxon>
        <taxon>Cavia</taxon>
    </lineage>
</organism>
<gene>
    <name type="primary">HRH2</name>
</gene>